<keyword id="KW-0032">Aminotransferase</keyword>
<keyword id="KW-0056">Arginine metabolism</keyword>
<keyword id="KW-0663">Pyridoxal phosphate</keyword>
<keyword id="KW-0808">Transferase</keyword>
<sequence>MSLSVTRENFDEWMVPVYVPAPFIPVRGEGSRLWDQQGKEYIDFAGGIAVNALGHAHPALREALNEQANRFWHTGNGYTNEPALRLAKKLIDATFAERVFFCNSGAEANEAALKLARKYAHDRVGNHKSGIVAFKNAFHGRTLFTVSAGGQPTYSQDFAPLPPDIRHAAYNDLNSASALIDDNTCAVIVEPVQGEGGVIPATNAFLQGLRELCDRHQALLIFDEVQTGVGRTGELYAYMHYGVTPDILTTAKALGGGFPIGAMLTTQDYASVMTPGTHGTTYGGNPLATAVAGKVLDIINTPEMQNGVRQRHDAFIERLNTINVRFGMFSEIRGLGLLLGCVLQTEFAGKAKLIAQEAAKAGVMVLIAGGDVVRFAPALNVSDEEIATGLDRFALACERLQAGGASCG</sequence>
<organism>
    <name type="scientific">Salmonella typhi</name>
    <dbReference type="NCBI Taxonomy" id="90370"/>
    <lineage>
        <taxon>Bacteria</taxon>
        <taxon>Pseudomonadati</taxon>
        <taxon>Pseudomonadota</taxon>
        <taxon>Gammaproteobacteria</taxon>
        <taxon>Enterobacterales</taxon>
        <taxon>Enterobacteriaceae</taxon>
        <taxon>Salmonella</taxon>
    </lineage>
</organism>
<evidence type="ECO:0000255" key="1">
    <source>
        <dbReference type="HAMAP-Rule" id="MF_01173"/>
    </source>
</evidence>
<reference key="1">
    <citation type="journal article" date="2001" name="Nature">
        <title>Complete genome sequence of a multiple drug resistant Salmonella enterica serovar Typhi CT18.</title>
        <authorList>
            <person name="Parkhill J."/>
            <person name="Dougan G."/>
            <person name="James K.D."/>
            <person name="Thomson N.R."/>
            <person name="Pickard D."/>
            <person name="Wain J."/>
            <person name="Churcher C.M."/>
            <person name="Mungall K.L."/>
            <person name="Bentley S.D."/>
            <person name="Holden M.T.G."/>
            <person name="Sebaihia M."/>
            <person name="Baker S."/>
            <person name="Basham D."/>
            <person name="Brooks K."/>
            <person name="Chillingworth T."/>
            <person name="Connerton P."/>
            <person name="Cronin A."/>
            <person name="Davis P."/>
            <person name="Davies R.M."/>
            <person name="Dowd L."/>
            <person name="White N."/>
            <person name="Farrar J."/>
            <person name="Feltwell T."/>
            <person name="Hamlin N."/>
            <person name="Haque A."/>
            <person name="Hien T.T."/>
            <person name="Holroyd S."/>
            <person name="Jagels K."/>
            <person name="Krogh A."/>
            <person name="Larsen T.S."/>
            <person name="Leather S."/>
            <person name="Moule S."/>
            <person name="O'Gaora P."/>
            <person name="Parry C."/>
            <person name="Quail M.A."/>
            <person name="Rutherford K.M."/>
            <person name="Simmonds M."/>
            <person name="Skelton J."/>
            <person name="Stevens K."/>
            <person name="Whitehead S."/>
            <person name="Barrell B.G."/>
        </authorList>
    </citation>
    <scope>NUCLEOTIDE SEQUENCE [LARGE SCALE GENOMIC DNA]</scope>
    <source>
        <strain>CT18</strain>
    </source>
</reference>
<reference key="2">
    <citation type="journal article" date="2003" name="J. Bacteriol.">
        <title>Comparative genomics of Salmonella enterica serovar Typhi strains Ty2 and CT18.</title>
        <authorList>
            <person name="Deng W."/>
            <person name="Liou S.-R."/>
            <person name="Plunkett G. III"/>
            <person name="Mayhew G.F."/>
            <person name="Rose D.J."/>
            <person name="Burland V."/>
            <person name="Kodoyianni V."/>
            <person name="Schwartz D.C."/>
            <person name="Blattner F.R."/>
        </authorList>
    </citation>
    <scope>NUCLEOTIDE SEQUENCE [LARGE SCALE GENOMIC DNA]</scope>
    <source>
        <strain>ATCC 700931 / Ty2</strain>
    </source>
</reference>
<protein>
    <recommendedName>
        <fullName evidence="1">Succinylornithine transaminase</fullName>
        <shortName>SOAT</shortName>
        <ecNumber evidence="1">2.6.1.81</ecNumber>
    </recommendedName>
    <alternativeName>
        <fullName evidence="1">Succinylornithine aminotransferase</fullName>
    </alternativeName>
</protein>
<proteinExistence type="inferred from homology"/>
<gene>
    <name evidence="1" type="primary">astC</name>
    <name evidence="1" type="synonym">argM</name>
    <name type="ordered locus">STY1811</name>
    <name type="ordered locus">t1182</name>
</gene>
<comment type="function">
    <text evidence="1">Catalyzes the transamination of N(2)-succinylornithine and alpha-ketoglutarate into N(2)-succinylglutamate semialdehyde and glutamate. Can also act as an acetylornithine aminotransferase.</text>
</comment>
<comment type="catalytic activity">
    <reaction evidence="1">
        <text>N(2)-succinyl-L-ornithine + 2-oxoglutarate = N-succinyl-L-glutamate 5-semialdehyde + L-glutamate</text>
        <dbReference type="Rhea" id="RHEA:16953"/>
        <dbReference type="ChEBI" id="CHEBI:16810"/>
        <dbReference type="ChEBI" id="CHEBI:29985"/>
        <dbReference type="ChEBI" id="CHEBI:58514"/>
        <dbReference type="ChEBI" id="CHEBI:58520"/>
        <dbReference type="EC" id="2.6.1.81"/>
    </reaction>
</comment>
<comment type="cofactor">
    <cofactor evidence="1">
        <name>pyridoxal 5'-phosphate</name>
        <dbReference type="ChEBI" id="CHEBI:597326"/>
    </cofactor>
</comment>
<comment type="pathway">
    <text evidence="1">Amino-acid degradation; L-arginine degradation via AST pathway; L-glutamate and succinate from L-arginine: step 3/5.</text>
</comment>
<comment type="similarity">
    <text evidence="1">Belongs to the class-III pyridoxal-phosphate-dependent aminotransferase family. AstC subfamily.</text>
</comment>
<name>ASTC_SALTI</name>
<dbReference type="EC" id="2.6.1.81" evidence="1"/>
<dbReference type="EMBL" id="AL513382">
    <property type="protein sequence ID" value="CAD02051.1"/>
    <property type="molecule type" value="Genomic_DNA"/>
</dbReference>
<dbReference type="EMBL" id="AE014613">
    <property type="protein sequence ID" value="AAO68839.1"/>
    <property type="molecule type" value="Genomic_DNA"/>
</dbReference>
<dbReference type="RefSeq" id="NP_456209.1">
    <property type="nucleotide sequence ID" value="NC_003198.1"/>
</dbReference>
<dbReference type="RefSeq" id="WP_000059512.1">
    <property type="nucleotide sequence ID" value="NZ_WSUR01000034.1"/>
</dbReference>
<dbReference type="SMR" id="Q8Z6F9"/>
<dbReference type="STRING" id="220341.gene:17585743"/>
<dbReference type="KEGG" id="stt:t1182"/>
<dbReference type="KEGG" id="sty:STY1811"/>
<dbReference type="PATRIC" id="fig|220341.7.peg.1823"/>
<dbReference type="eggNOG" id="COG4992">
    <property type="taxonomic scope" value="Bacteria"/>
</dbReference>
<dbReference type="HOGENOM" id="CLU_016922_10_1_6"/>
<dbReference type="OMA" id="RSAWDLC"/>
<dbReference type="OrthoDB" id="9801052at2"/>
<dbReference type="UniPathway" id="UPA00185">
    <property type="reaction ID" value="UER00281"/>
</dbReference>
<dbReference type="Proteomes" id="UP000000541">
    <property type="component" value="Chromosome"/>
</dbReference>
<dbReference type="Proteomes" id="UP000002670">
    <property type="component" value="Chromosome"/>
</dbReference>
<dbReference type="GO" id="GO:0042802">
    <property type="term" value="F:identical protein binding"/>
    <property type="evidence" value="ECO:0007669"/>
    <property type="project" value="TreeGrafter"/>
</dbReference>
<dbReference type="GO" id="GO:0030170">
    <property type="term" value="F:pyridoxal phosphate binding"/>
    <property type="evidence" value="ECO:0007669"/>
    <property type="project" value="UniProtKB-UniRule"/>
</dbReference>
<dbReference type="GO" id="GO:0043825">
    <property type="term" value="F:succinylornithine transaminase activity"/>
    <property type="evidence" value="ECO:0007669"/>
    <property type="project" value="UniProtKB-EC"/>
</dbReference>
<dbReference type="GO" id="GO:1901607">
    <property type="term" value="P:alpha-amino acid biosynthetic process"/>
    <property type="evidence" value="ECO:0007669"/>
    <property type="project" value="UniProtKB-ARBA"/>
</dbReference>
<dbReference type="GO" id="GO:0019544">
    <property type="term" value="P:arginine catabolic process to glutamate"/>
    <property type="evidence" value="ECO:0007669"/>
    <property type="project" value="UniProtKB-UniRule"/>
</dbReference>
<dbReference type="GO" id="GO:0019545">
    <property type="term" value="P:arginine catabolic process to succinate"/>
    <property type="evidence" value="ECO:0007669"/>
    <property type="project" value="UniProtKB-UniRule"/>
</dbReference>
<dbReference type="GO" id="GO:0006593">
    <property type="term" value="P:ornithine catabolic process"/>
    <property type="evidence" value="ECO:0007669"/>
    <property type="project" value="InterPro"/>
</dbReference>
<dbReference type="CDD" id="cd00610">
    <property type="entry name" value="OAT_like"/>
    <property type="match status" value="1"/>
</dbReference>
<dbReference type="FunFam" id="3.40.640.10:FF:000004">
    <property type="entry name" value="Acetylornithine aminotransferase"/>
    <property type="match status" value="1"/>
</dbReference>
<dbReference type="Gene3D" id="3.90.1150.10">
    <property type="entry name" value="Aspartate Aminotransferase, domain 1"/>
    <property type="match status" value="1"/>
</dbReference>
<dbReference type="Gene3D" id="3.40.640.10">
    <property type="entry name" value="Type I PLP-dependent aspartate aminotransferase-like (Major domain)"/>
    <property type="match status" value="1"/>
</dbReference>
<dbReference type="HAMAP" id="MF_01107">
    <property type="entry name" value="ArgD_aminotrans_3"/>
    <property type="match status" value="1"/>
</dbReference>
<dbReference type="HAMAP" id="MF_01173">
    <property type="entry name" value="AstC_aminotrans_3"/>
    <property type="match status" value="1"/>
</dbReference>
<dbReference type="InterPro" id="IPR017652">
    <property type="entry name" value="Ac/SucOrn_transaminase_bac"/>
</dbReference>
<dbReference type="InterPro" id="IPR004636">
    <property type="entry name" value="AcOrn/SuccOrn_fam"/>
</dbReference>
<dbReference type="InterPro" id="IPR005814">
    <property type="entry name" value="Aminotrans_3"/>
</dbReference>
<dbReference type="InterPro" id="IPR049704">
    <property type="entry name" value="Aminotrans_3_PPA_site"/>
</dbReference>
<dbReference type="InterPro" id="IPR050103">
    <property type="entry name" value="Class-III_PLP-dep_AT"/>
</dbReference>
<dbReference type="InterPro" id="IPR015424">
    <property type="entry name" value="PyrdxlP-dep_Trfase"/>
</dbReference>
<dbReference type="InterPro" id="IPR015421">
    <property type="entry name" value="PyrdxlP-dep_Trfase_major"/>
</dbReference>
<dbReference type="InterPro" id="IPR015422">
    <property type="entry name" value="PyrdxlP-dep_Trfase_small"/>
</dbReference>
<dbReference type="InterPro" id="IPR001763">
    <property type="entry name" value="Rhodanese-like_dom"/>
</dbReference>
<dbReference type="InterPro" id="IPR026330">
    <property type="entry name" value="SOAT"/>
</dbReference>
<dbReference type="NCBIfam" id="TIGR03246">
    <property type="entry name" value="arg_catab_astC"/>
    <property type="match status" value="1"/>
</dbReference>
<dbReference type="NCBIfam" id="TIGR00707">
    <property type="entry name" value="argD"/>
    <property type="match status" value="1"/>
</dbReference>
<dbReference type="NCBIfam" id="NF002325">
    <property type="entry name" value="PRK01278.1"/>
    <property type="match status" value="1"/>
</dbReference>
<dbReference type="NCBIfam" id="NF003468">
    <property type="entry name" value="PRK05093.1"/>
    <property type="match status" value="1"/>
</dbReference>
<dbReference type="NCBIfam" id="NF009047">
    <property type="entry name" value="PRK12381.1"/>
    <property type="match status" value="1"/>
</dbReference>
<dbReference type="PANTHER" id="PTHR11986">
    <property type="entry name" value="AMINOTRANSFERASE CLASS III"/>
    <property type="match status" value="1"/>
</dbReference>
<dbReference type="PANTHER" id="PTHR11986:SF113">
    <property type="entry name" value="SUCCINYLORNITHINE TRANSAMINASE"/>
    <property type="match status" value="1"/>
</dbReference>
<dbReference type="Pfam" id="PF00202">
    <property type="entry name" value="Aminotran_3"/>
    <property type="match status" value="1"/>
</dbReference>
<dbReference type="PIRSF" id="PIRSF000521">
    <property type="entry name" value="Transaminase_4ab_Lys_Orn"/>
    <property type="match status" value="1"/>
</dbReference>
<dbReference type="SUPFAM" id="SSF53383">
    <property type="entry name" value="PLP-dependent transferases"/>
    <property type="match status" value="1"/>
</dbReference>
<dbReference type="PROSITE" id="PS00600">
    <property type="entry name" value="AA_TRANSFER_CLASS_3"/>
    <property type="match status" value="1"/>
</dbReference>
<accession>Q8Z6F9</accession>
<feature type="chain" id="PRO_0000120356" description="Succinylornithine transaminase">
    <location>
        <begin position="1"/>
        <end position="408"/>
    </location>
</feature>
<feature type="modified residue" description="N6-(pyridoxal phosphate)lysine" evidence="1">
    <location>
        <position position="252"/>
    </location>
</feature>